<reference key="1">
    <citation type="journal article" date="1997" name="Science">
        <title>Structural and functional conservation of the Caenorhabditis elegans timing gene clk-1.</title>
        <authorList>
            <person name="Ewbank J.J."/>
            <person name="Barnes T.M."/>
            <person name="Lakowski B."/>
            <person name="Lussier M."/>
            <person name="Bussey H."/>
            <person name="Hekimi S."/>
        </authorList>
    </citation>
    <scope>NUCLEOTIDE SEQUENCE [GENOMIC DNA]</scope>
    <scope>FUNCTION</scope>
    <scope>MUTAGENESIS OF GLU-148</scope>
    <scope>DISRUPTION PHENOTYPE</scope>
</reference>
<reference key="2">
    <citation type="journal article" date="1998" name="Science">
        <title>Genome sequence of the nematode C. elegans: a platform for investigating biology.</title>
        <authorList>
            <consortium name="The C. elegans sequencing consortium"/>
        </authorList>
    </citation>
    <scope>NUCLEOTIDE SEQUENCE [LARGE SCALE GENOMIC DNA]</scope>
    <source>
        <strain>Bristol N2</strain>
    </source>
</reference>
<reference key="3">
    <citation type="journal article" date="2015" name="Nat. Cell Biol.">
        <title>A nuclear role for the respiratory enzyme CLK-1 in regulating mitochondrial stress responses and longevity.</title>
        <authorList>
            <person name="Monaghan R.M."/>
            <person name="Barnes R.G."/>
            <person name="Fisher K."/>
            <person name="Andreou T."/>
            <person name="Rooney N."/>
            <person name="Poulin G.B."/>
            <person name="Whitmarsh A.J."/>
        </authorList>
    </citation>
    <scope>FUNCTION</scope>
    <scope>SUBCELLULAR LOCATION</scope>
    <scope>MUTAGENESIS OF 1-MET--ALA-12</scope>
</reference>
<reference key="4">
    <citation type="journal article" date="2018" name="Life. Sci Alliance">
        <title>Mitochondrial ubiquinone-mediated longevity is marked by reduced cytoplasmic mRNA translation.</title>
        <authorList>
            <person name="Molenaars M."/>
            <person name="Janssens G.E."/>
            <person name="Santermans T."/>
            <person name="Lezzerini M."/>
            <person name="Jelier R."/>
            <person name="MacInnes A.W."/>
            <person name="Houtkooper R.H."/>
        </authorList>
    </citation>
    <scope>FUNCTION</scope>
</reference>
<proteinExistence type="evidence at protein level"/>
<gene>
    <name evidence="2" type="primary">clk-1</name>
    <name evidence="7" type="ORF">ZC395.2</name>
</gene>
<evidence type="ECO:0000250" key="1">
    <source>
        <dbReference type="UniProtKB" id="Q99807"/>
    </source>
</evidence>
<evidence type="ECO:0000255" key="2">
    <source>
        <dbReference type="HAMAP-Rule" id="MF_03194"/>
    </source>
</evidence>
<evidence type="ECO:0000269" key="3">
    <source>
    </source>
</evidence>
<evidence type="ECO:0000269" key="4">
    <source>
    </source>
</evidence>
<evidence type="ECO:0000269" key="5">
    <source>
    </source>
</evidence>
<evidence type="ECO:0000305" key="6"/>
<evidence type="ECO:0000312" key="7">
    <source>
        <dbReference type="WormBase" id="ZC395.2"/>
    </source>
</evidence>
<protein>
    <recommendedName>
        <fullName evidence="2">NADPH-dependent 3-demethoxyubiquinone 3-hydroxylase, mitochondrial</fullName>
        <ecNumber evidence="2">1.14.13.253</ecNumber>
    </recommendedName>
    <alternativeName>
        <fullName evidence="2">3-demethoxyubiquinone 3-hydroxylase (NADH)</fullName>
    </alternativeName>
    <alternativeName>
        <fullName evidence="7">Clock abnormal protein 1</fullName>
        <shortName evidence="6">Protein clk-1</shortName>
    </alternativeName>
    <alternativeName>
        <fullName evidence="2">Ubiquinone biosynthesis monooxygenase COQ7</fullName>
    </alternativeName>
</protein>
<organism>
    <name type="scientific">Caenorhabditis elegans</name>
    <dbReference type="NCBI Taxonomy" id="6239"/>
    <lineage>
        <taxon>Eukaryota</taxon>
        <taxon>Metazoa</taxon>
        <taxon>Ecdysozoa</taxon>
        <taxon>Nematoda</taxon>
        <taxon>Chromadorea</taxon>
        <taxon>Rhabditida</taxon>
        <taxon>Rhabditina</taxon>
        <taxon>Rhabditomorpha</taxon>
        <taxon>Rhabditoidea</taxon>
        <taxon>Rhabditidae</taxon>
        <taxon>Peloderinae</taxon>
        <taxon>Caenorhabditis</taxon>
    </lineage>
</organism>
<accession>P48376</accession>
<keyword id="KW-0408">Iron</keyword>
<keyword id="KW-0472">Membrane</keyword>
<keyword id="KW-0479">Metal-binding</keyword>
<keyword id="KW-0496">Mitochondrion</keyword>
<keyword id="KW-0999">Mitochondrion inner membrane</keyword>
<keyword id="KW-0503">Monooxygenase</keyword>
<keyword id="KW-0520">NAD</keyword>
<keyword id="KW-0539">Nucleus</keyword>
<keyword id="KW-0560">Oxidoreductase</keyword>
<keyword id="KW-1185">Reference proteome</keyword>
<keyword id="KW-0677">Repeat</keyword>
<keyword id="KW-0809">Transit peptide</keyword>
<keyword id="KW-0831">Ubiquinone biosynthesis</keyword>
<dbReference type="EC" id="1.14.13.253" evidence="2"/>
<dbReference type="EMBL" id="FO080775">
    <property type="protein sequence ID" value="CCD66658.1"/>
    <property type="molecule type" value="Genomic_DNA"/>
</dbReference>
<dbReference type="PIR" id="T27545">
    <property type="entry name" value="T27545"/>
</dbReference>
<dbReference type="RefSeq" id="NP_498128.1">
    <property type="nucleotide sequence ID" value="NM_065727.4"/>
</dbReference>
<dbReference type="SMR" id="P48376"/>
<dbReference type="FunCoup" id="P48376">
    <property type="interactions" value="1726"/>
</dbReference>
<dbReference type="STRING" id="6239.ZC395.2.1"/>
<dbReference type="PaxDb" id="6239-ZC395.2"/>
<dbReference type="PeptideAtlas" id="P48376"/>
<dbReference type="EnsemblMetazoa" id="ZC395.2.1">
    <property type="protein sequence ID" value="ZC395.2.1"/>
    <property type="gene ID" value="WBGene00000536"/>
</dbReference>
<dbReference type="GeneID" id="175729"/>
<dbReference type="KEGG" id="cel:CELE_ZC395.2"/>
<dbReference type="UCSC" id="ZC395.2">
    <property type="organism name" value="c. elegans"/>
</dbReference>
<dbReference type="AGR" id="WB:WBGene00000536"/>
<dbReference type="CTD" id="175729"/>
<dbReference type="WormBase" id="ZC395.2">
    <property type="protein sequence ID" value="CE01438"/>
    <property type="gene ID" value="WBGene00000536"/>
    <property type="gene designation" value="clk-1"/>
</dbReference>
<dbReference type="eggNOG" id="KOG4061">
    <property type="taxonomic scope" value="Eukaryota"/>
</dbReference>
<dbReference type="GeneTree" id="ENSGT00390000014520"/>
<dbReference type="HOGENOM" id="CLU_071892_2_0_1"/>
<dbReference type="InParanoid" id="P48376"/>
<dbReference type="OMA" id="WSTAVMG"/>
<dbReference type="OrthoDB" id="275371at2759"/>
<dbReference type="PhylomeDB" id="P48376"/>
<dbReference type="BioCyc" id="MetaCyc:MONOMER-13880"/>
<dbReference type="BRENDA" id="1.14.99.60">
    <property type="organism ID" value="1045"/>
</dbReference>
<dbReference type="Reactome" id="R-CEL-2142789">
    <property type="pathway name" value="Ubiquinol biosynthesis"/>
</dbReference>
<dbReference type="UniPathway" id="UPA00232"/>
<dbReference type="PRO" id="PR:P48376"/>
<dbReference type="Proteomes" id="UP000001940">
    <property type="component" value="Chromosome III"/>
</dbReference>
<dbReference type="Bgee" id="WBGene00000536">
    <property type="expression patterns" value="Expressed in pharyngeal muscle cell (C elegans) and 4 other cell types or tissues"/>
</dbReference>
<dbReference type="GO" id="GO:0031314">
    <property type="term" value="C:extrinsic component of mitochondrial inner membrane"/>
    <property type="evidence" value="ECO:0007669"/>
    <property type="project" value="UniProtKB-UniRule"/>
</dbReference>
<dbReference type="GO" id="GO:0005743">
    <property type="term" value="C:mitochondrial inner membrane"/>
    <property type="evidence" value="ECO:0000318"/>
    <property type="project" value="GO_Central"/>
</dbReference>
<dbReference type="GO" id="GO:0005739">
    <property type="term" value="C:mitochondrion"/>
    <property type="evidence" value="ECO:0000314"/>
    <property type="project" value="WormBase"/>
</dbReference>
<dbReference type="GO" id="GO:0005634">
    <property type="term" value="C:nucleus"/>
    <property type="evidence" value="ECO:0000314"/>
    <property type="project" value="WormBase"/>
</dbReference>
<dbReference type="GO" id="GO:0008682">
    <property type="term" value="F:3-demethoxyubiquinol 3-hydroxylase activity"/>
    <property type="evidence" value="ECO:0000318"/>
    <property type="project" value="GO_Central"/>
</dbReference>
<dbReference type="GO" id="GO:0160224">
    <property type="term" value="F:3-demethoxyubiquinone 3-hydroxylase (NADH) activity"/>
    <property type="evidence" value="ECO:0007669"/>
    <property type="project" value="RHEA"/>
</dbReference>
<dbReference type="GO" id="GO:0046872">
    <property type="term" value="F:metal ion binding"/>
    <property type="evidence" value="ECO:0007669"/>
    <property type="project" value="UniProtKB-KW"/>
</dbReference>
<dbReference type="GO" id="GO:0000976">
    <property type="term" value="F:transcription cis-regulatory region binding"/>
    <property type="evidence" value="ECO:0000314"/>
    <property type="project" value="WormBase"/>
</dbReference>
<dbReference type="GO" id="GO:0030534">
    <property type="term" value="P:adult behavior"/>
    <property type="evidence" value="ECO:0000315"/>
    <property type="project" value="WormBase"/>
</dbReference>
<dbReference type="GO" id="GO:0045333">
    <property type="term" value="P:cellular respiration"/>
    <property type="evidence" value="ECO:0000304"/>
    <property type="project" value="WormBase"/>
</dbReference>
<dbReference type="GO" id="GO:0008340">
    <property type="term" value="P:determination of adult lifespan"/>
    <property type="evidence" value="ECO:0000315"/>
    <property type="project" value="UniProtKB"/>
</dbReference>
<dbReference type="GO" id="GO:0010629">
    <property type="term" value="P:negative regulation of gene expression"/>
    <property type="evidence" value="ECO:0000315"/>
    <property type="project" value="UniProtKB"/>
</dbReference>
<dbReference type="GO" id="GO:0001933">
    <property type="term" value="P:negative regulation of protein phosphorylation"/>
    <property type="evidence" value="ECO:0000315"/>
    <property type="project" value="UniProtKB"/>
</dbReference>
<dbReference type="GO" id="GO:0000122">
    <property type="term" value="P:negative regulation of transcription by RNA polymerase II"/>
    <property type="evidence" value="ECO:0000315"/>
    <property type="project" value="WormBase"/>
</dbReference>
<dbReference type="GO" id="GO:0006119">
    <property type="term" value="P:oxidative phosphorylation"/>
    <property type="evidence" value="ECO:0000315"/>
    <property type="project" value="WormBase"/>
</dbReference>
<dbReference type="GO" id="GO:0048520">
    <property type="term" value="P:positive regulation of behavior"/>
    <property type="evidence" value="ECO:0000315"/>
    <property type="project" value="WormBase"/>
</dbReference>
<dbReference type="GO" id="GO:0051094">
    <property type="term" value="P:positive regulation of developmental process"/>
    <property type="evidence" value="ECO:0000315"/>
    <property type="project" value="WormBase"/>
</dbReference>
<dbReference type="GO" id="GO:0010628">
    <property type="term" value="P:positive regulation of gene expression"/>
    <property type="evidence" value="ECO:0000316"/>
    <property type="project" value="UniProtKB"/>
</dbReference>
<dbReference type="GO" id="GO:0040010">
    <property type="term" value="P:positive regulation of growth rate"/>
    <property type="evidence" value="ECO:0000315"/>
    <property type="project" value="WormBase"/>
</dbReference>
<dbReference type="GO" id="GO:0061063">
    <property type="term" value="P:positive regulation of nematode larval development"/>
    <property type="evidence" value="ECO:0000316"/>
    <property type="project" value="UniProtKB"/>
</dbReference>
<dbReference type="GO" id="GO:1904808">
    <property type="term" value="P:positive regulation of protein oxidation"/>
    <property type="evidence" value="ECO:0000316"/>
    <property type="project" value="UniProtKB"/>
</dbReference>
<dbReference type="GO" id="GO:0001934">
    <property type="term" value="P:positive regulation of protein phosphorylation"/>
    <property type="evidence" value="ECO:0000315"/>
    <property type="project" value="UniProtKB"/>
</dbReference>
<dbReference type="GO" id="GO:0045944">
    <property type="term" value="P:positive regulation of transcription by RNA polymerase II"/>
    <property type="evidence" value="ECO:0000315"/>
    <property type="project" value="WormBase"/>
</dbReference>
<dbReference type="GO" id="GO:0010468">
    <property type="term" value="P:regulation of gene expression"/>
    <property type="evidence" value="ECO:0000318"/>
    <property type="project" value="GO_Central"/>
</dbReference>
<dbReference type="GO" id="GO:2000377">
    <property type="term" value="P:regulation of reactive oxygen species metabolic process"/>
    <property type="evidence" value="ECO:0000315"/>
    <property type="project" value="WormBase"/>
</dbReference>
<dbReference type="GO" id="GO:0022414">
    <property type="term" value="P:reproductive process"/>
    <property type="evidence" value="ECO:0000315"/>
    <property type="project" value="WormBase"/>
</dbReference>
<dbReference type="GO" id="GO:0009410">
    <property type="term" value="P:response to xenobiotic stimulus"/>
    <property type="evidence" value="ECO:0000315"/>
    <property type="project" value="WormBase"/>
</dbReference>
<dbReference type="GO" id="GO:0006744">
    <property type="term" value="P:ubiquinone biosynthetic process"/>
    <property type="evidence" value="ECO:0000314"/>
    <property type="project" value="WormBase"/>
</dbReference>
<dbReference type="CDD" id="cd01042">
    <property type="entry name" value="DMQH"/>
    <property type="match status" value="1"/>
</dbReference>
<dbReference type="HAMAP" id="MF_01658">
    <property type="entry name" value="COQ7"/>
    <property type="match status" value="1"/>
</dbReference>
<dbReference type="InterPro" id="IPR009078">
    <property type="entry name" value="Ferritin-like_SF"/>
</dbReference>
<dbReference type="InterPro" id="IPR011566">
    <property type="entry name" value="Ubq_synth_Coq7"/>
</dbReference>
<dbReference type="PANTHER" id="PTHR11237:SF4">
    <property type="entry name" value="5-DEMETHOXYUBIQUINONE HYDROXYLASE, MITOCHONDRIAL"/>
    <property type="match status" value="1"/>
</dbReference>
<dbReference type="PANTHER" id="PTHR11237">
    <property type="entry name" value="COENZYME Q10 BIOSYNTHESIS PROTEIN 7"/>
    <property type="match status" value="1"/>
</dbReference>
<dbReference type="Pfam" id="PF03232">
    <property type="entry name" value="COQ7"/>
    <property type="match status" value="1"/>
</dbReference>
<dbReference type="SUPFAM" id="SSF47240">
    <property type="entry name" value="Ferritin-like"/>
    <property type="match status" value="1"/>
</dbReference>
<comment type="function">
    <text evidence="2 3 4 5">Catalyzes the hydroxylation of the 5-methoxy-2-methyl-3-(all-trans-polyprenyl)benzoquinone at the C6 position and participates in the biosynthesis of ubiquinone. Catalyzes the reaction through a substrate-mediated reduction pathway, whereby NADH shuttles electrons to 5-methoxy-2-methyl-3-(all-trans-decaprenyl)benzoquinone, which then transfers the electrons to the two Fe(3+) centers. The binding of 5-methoxy-2-methyl-3-(all-trans-polyprenyl)benzoquinone (DMQn) mediates reduction of the diiron center by nicotinamide adenine dinucleotide (NADH) and initiates oxygen activation for subsequent DMQ hydroxylation (By similarity). Also has a structural role in the COQ enzyme complex, stabilizing other COQ polypeptides (By similarity). Involved in lifespan determination in a ubiquinone-independent manner (PubMed:25961505, PubMed:9020081). Plays a role in modulating mitochondrial stress responses, acting in the nucleus, perhaps via regulating gene expression, independent of its characterized mitochondrial function in ubiquinone biosynthesis (PubMed:25961505). Plays a role in modulating polyribosome formation (PubMed:30198021).</text>
</comment>
<comment type="catalytic activity">
    <reaction evidence="2">
        <text>a 5-methoxy-2-methyl-3-(all-trans-polyprenyl)benzoquinone + NADH + O2 = a 3-demethylubiquinone + NAD(+) + H2O</text>
        <dbReference type="Rhea" id="RHEA:81211"/>
        <dbReference type="Rhea" id="RHEA-COMP:19654"/>
        <dbReference type="Rhea" id="RHEA-COMP:19655"/>
        <dbReference type="ChEBI" id="CHEBI:15377"/>
        <dbReference type="ChEBI" id="CHEBI:15379"/>
        <dbReference type="ChEBI" id="CHEBI:57540"/>
        <dbReference type="ChEBI" id="CHEBI:57945"/>
        <dbReference type="ChEBI" id="CHEBI:231825"/>
        <dbReference type="ChEBI" id="CHEBI:231829"/>
        <dbReference type="EC" id="1.14.13.253"/>
    </reaction>
    <physiologicalReaction direction="left-to-right" evidence="2">
        <dbReference type="Rhea" id="RHEA:81212"/>
    </physiologicalReaction>
</comment>
<comment type="cofactor">
    <cofactor evidence="2">
        <name>Fe cation</name>
        <dbReference type="ChEBI" id="CHEBI:24875"/>
    </cofactor>
    <text evidence="2">Binds 2 iron ions per subunit.</text>
</comment>
<comment type="pathway">
    <text evidence="2">Cofactor biosynthesis; ubiquinone biosynthesis.</text>
</comment>
<comment type="subunit">
    <text evidence="2">Component of a multi-subunit COQ enzyme complex.</text>
</comment>
<comment type="subcellular location">
    <subcellularLocation>
        <location evidence="2">Mitochondrion inner membrane</location>
        <topology evidence="2">Peripheral membrane protein</topology>
        <orientation evidence="2">Matrix side</orientation>
    </subcellularLocation>
    <subcellularLocation>
        <location evidence="3">Mitochondrion</location>
    </subcellularLocation>
    <subcellularLocation>
        <location evidence="3">Nucleus</location>
    </subcellularLocation>
</comment>
<comment type="disruption phenotype">
    <text evidence="5">Worms show deregulation timing of a wide range of physiological processes. This leads to an average lengthening of the worm's early cell cycles, the embryonic and postembryonic development, and the period of rhythmic adult behaviors.</text>
</comment>
<comment type="similarity">
    <text evidence="2">Belongs to the COQ7 family.</text>
</comment>
<feature type="transit peptide" description="Mitochondrion" evidence="2">
    <location>
        <begin position="1"/>
        <end position="8"/>
    </location>
</feature>
<feature type="chain" id="PRO_0000079250" description="NADPH-dependent 3-demethoxyubiquinone 3-hydroxylase, mitochondrial">
    <location>
        <begin position="9"/>
        <end position="187"/>
    </location>
</feature>
<feature type="repeat" description="1">
    <location>
        <begin position="28"/>
        <end position="99"/>
    </location>
</feature>
<feature type="repeat" description="2">
    <location>
        <begin position="100"/>
        <end position="187"/>
    </location>
</feature>
<feature type="region of interest" description="2 X approximate tandem repeats">
    <location>
        <begin position="28"/>
        <end position="187"/>
    </location>
</feature>
<feature type="binding site" evidence="1">
    <location>
        <position position="21"/>
    </location>
    <ligand>
        <name>NADH</name>
        <dbReference type="ChEBI" id="CHEBI:57945"/>
    </ligand>
</feature>
<feature type="binding site" evidence="2">
    <location>
        <position position="30"/>
    </location>
    <ligand>
        <name>Fe cation</name>
        <dbReference type="ChEBI" id="CHEBI:24875"/>
        <label>1</label>
    </ligand>
</feature>
<feature type="binding site" evidence="2">
    <location>
        <position position="60"/>
    </location>
    <ligand>
        <name>Fe cation</name>
        <dbReference type="ChEBI" id="CHEBI:24875"/>
        <label>1</label>
    </ligand>
</feature>
<feature type="binding site" evidence="2">
    <location>
        <position position="60"/>
    </location>
    <ligand>
        <name>Fe cation</name>
        <dbReference type="ChEBI" id="CHEBI:24875"/>
        <label>2</label>
    </ligand>
</feature>
<feature type="binding site" evidence="2">
    <location>
        <position position="63"/>
    </location>
    <ligand>
        <name>Fe cation</name>
        <dbReference type="ChEBI" id="CHEBI:24875"/>
        <label>1</label>
    </ligand>
</feature>
<feature type="binding site" evidence="2">
    <location>
        <position position="112"/>
    </location>
    <ligand>
        <name>Fe cation</name>
        <dbReference type="ChEBI" id="CHEBI:24875"/>
        <label>2</label>
    </ligand>
</feature>
<feature type="binding site" evidence="2">
    <location>
        <position position="148"/>
    </location>
    <ligand>
        <name>Fe cation</name>
        <dbReference type="ChEBI" id="CHEBI:24875"/>
        <label>1</label>
    </ligand>
</feature>
<feature type="binding site" evidence="2">
    <location>
        <position position="148"/>
    </location>
    <ligand>
        <name>Fe cation</name>
        <dbReference type="ChEBI" id="CHEBI:24875"/>
        <label>2</label>
    </ligand>
</feature>
<feature type="binding site" evidence="2">
    <location>
        <position position="151"/>
    </location>
    <ligand>
        <name>Fe cation</name>
        <dbReference type="ChEBI" id="CHEBI:24875"/>
        <label>2</label>
    </ligand>
</feature>
<feature type="binding site" evidence="1">
    <location>
        <position position="186"/>
    </location>
    <ligand>
        <name>NADH</name>
        <dbReference type="ChEBI" id="CHEBI:57945"/>
    </ligand>
</feature>
<feature type="mutagenesis site" description="Enhances nuclear localization. Unable to contribute to the mitochondrial role in ubiquinone biosynthesis. Modulates lifespan." evidence="3">
    <location>
        <begin position="1"/>
        <end position="12"/>
    </location>
</feature>
<feature type="mutagenesis site" description="In e2519; Extension of life-span, longer and more irregular defecation period." evidence="5">
    <original>E</original>
    <variation>K</variation>
    <location>
        <position position="148"/>
    </location>
</feature>
<sequence length="187" mass="20466">MFRVITRGAHTAASRQALIEKIIRVDHAGELGADRIYAGQLAVLQGSSVGSVIKKMWDEEKEHLDTMERLAAKHNVPHTVFSPVFSVAAYALGVGSALLGKEGAMACTIAVEELIGQHYNDQLKELLADDPETHKELLKILTRLRDEELHHHDTGVEHDGMKAPAYSALKWIIQTGCKGAIAIAEKI</sequence>
<name>COQ7_CAEEL</name>